<evidence type="ECO:0000255" key="1"/>
<evidence type="ECO:0000269" key="2">
    <source>
    </source>
</evidence>
<evidence type="ECO:0000269" key="3">
    <source>
    </source>
</evidence>
<evidence type="ECO:0000303" key="4">
    <source>
    </source>
</evidence>
<evidence type="ECO:0000305" key="5"/>
<evidence type="ECO:0000305" key="6">
    <source>
    </source>
</evidence>
<evidence type="ECO:0000312" key="7">
    <source>
        <dbReference type="Araport" id="AT1G15220"/>
    </source>
</evidence>
<evidence type="ECO:0000312" key="8">
    <source>
        <dbReference type="EMBL" id="AAD39651.1"/>
    </source>
</evidence>
<gene>
    <name evidence="4" type="primary">CCMH</name>
    <name evidence="7" type="ordered locus">At1g15220</name>
    <name evidence="8" type="ORF">F9L1.17</name>
</gene>
<reference key="1">
    <citation type="journal article" date="2000" name="Nature">
        <title>Sequence and analysis of chromosome 1 of the plant Arabidopsis thaliana.</title>
        <authorList>
            <person name="Theologis A."/>
            <person name="Ecker J.R."/>
            <person name="Palm C.J."/>
            <person name="Federspiel N.A."/>
            <person name="Kaul S."/>
            <person name="White O."/>
            <person name="Alonso J."/>
            <person name="Altafi H."/>
            <person name="Araujo R."/>
            <person name="Bowman C.L."/>
            <person name="Brooks S.Y."/>
            <person name="Buehler E."/>
            <person name="Chan A."/>
            <person name="Chao Q."/>
            <person name="Chen H."/>
            <person name="Cheuk R.F."/>
            <person name="Chin C.W."/>
            <person name="Chung M.K."/>
            <person name="Conn L."/>
            <person name="Conway A.B."/>
            <person name="Conway A.R."/>
            <person name="Creasy T.H."/>
            <person name="Dewar K."/>
            <person name="Dunn P."/>
            <person name="Etgu P."/>
            <person name="Feldblyum T.V."/>
            <person name="Feng J.-D."/>
            <person name="Fong B."/>
            <person name="Fujii C.Y."/>
            <person name="Gill J.E."/>
            <person name="Goldsmith A.D."/>
            <person name="Haas B."/>
            <person name="Hansen N.F."/>
            <person name="Hughes B."/>
            <person name="Huizar L."/>
            <person name="Hunter J.L."/>
            <person name="Jenkins J."/>
            <person name="Johnson-Hopson C."/>
            <person name="Khan S."/>
            <person name="Khaykin E."/>
            <person name="Kim C.J."/>
            <person name="Koo H.L."/>
            <person name="Kremenetskaia I."/>
            <person name="Kurtz D.B."/>
            <person name="Kwan A."/>
            <person name="Lam B."/>
            <person name="Langin-Hooper S."/>
            <person name="Lee A."/>
            <person name="Lee J.M."/>
            <person name="Lenz C.A."/>
            <person name="Li J.H."/>
            <person name="Li Y.-P."/>
            <person name="Lin X."/>
            <person name="Liu S.X."/>
            <person name="Liu Z.A."/>
            <person name="Luros J.S."/>
            <person name="Maiti R."/>
            <person name="Marziali A."/>
            <person name="Militscher J."/>
            <person name="Miranda M."/>
            <person name="Nguyen M."/>
            <person name="Nierman W.C."/>
            <person name="Osborne B.I."/>
            <person name="Pai G."/>
            <person name="Peterson J."/>
            <person name="Pham P.K."/>
            <person name="Rizzo M."/>
            <person name="Rooney T."/>
            <person name="Rowley D."/>
            <person name="Sakano H."/>
            <person name="Salzberg S.L."/>
            <person name="Schwartz J.R."/>
            <person name="Shinn P."/>
            <person name="Southwick A.M."/>
            <person name="Sun H."/>
            <person name="Tallon L.J."/>
            <person name="Tambunga G."/>
            <person name="Toriumi M.J."/>
            <person name="Town C.D."/>
            <person name="Utterback T."/>
            <person name="Van Aken S."/>
            <person name="Vaysberg M."/>
            <person name="Vysotskaia V.S."/>
            <person name="Walker M."/>
            <person name="Wu D."/>
            <person name="Yu G."/>
            <person name="Fraser C.M."/>
            <person name="Venter J.C."/>
            <person name="Davis R.W."/>
        </authorList>
    </citation>
    <scope>NUCLEOTIDE SEQUENCE [LARGE SCALE GENOMIC DNA]</scope>
    <source>
        <strain>cv. Columbia</strain>
    </source>
</reference>
<reference key="2">
    <citation type="journal article" date="2017" name="Plant J.">
        <title>Araport11: a complete reannotation of the Arabidopsis thaliana reference genome.</title>
        <authorList>
            <person name="Cheng C.Y."/>
            <person name="Krishnakumar V."/>
            <person name="Chan A.P."/>
            <person name="Thibaud-Nissen F."/>
            <person name="Schobel S."/>
            <person name="Town C.D."/>
        </authorList>
    </citation>
    <scope>GENOME REANNOTATION</scope>
    <source>
        <strain>cv. Columbia</strain>
    </source>
</reference>
<reference key="3">
    <citation type="journal article" date="2003" name="Science">
        <title>Empirical analysis of transcriptional activity in the Arabidopsis genome.</title>
        <authorList>
            <person name="Yamada K."/>
            <person name="Lim J."/>
            <person name="Dale J.M."/>
            <person name="Chen H."/>
            <person name="Shinn P."/>
            <person name="Palm C.J."/>
            <person name="Southwick A.M."/>
            <person name="Wu H.C."/>
            <person name="Kim C.J."/>
            <person name="Nguyen M."/>
            <person name="Pham P.K."/>
            <person name="Cheuk R.F."/>
            <person name="Karlin-Newmann G."/>
            <person name="Liu S.X."/>
            <person name="Lam B."/>
            <person name="Sakano H."/>
            <person name="Wu T."/>
            <person name="Yu G."/>
            <person name="Miranda M."/>
            <person name="Quach H.L."/>
            <person name="Tripp M."/>
            <person name="Chang C.H."/>
            <person name="Lee J.M."/>
            <person name="Toriumi M.J."/>
            <person name="Chan M.M."/>
            <person name="Tang C.C."/>
            <person name="Onodera C.S."/>
            <person name="Deng J.M."/>
            <person name="Akiyama K."/>
            <person name="Ansari Y."/>
            <person name="Arakawa T."/>
            <person name="Banh J."/>
            <person name="Banno F."/>
            <person name="Bowser L."/>
            <person name="Brooks S.Y."/>
            <person name="Carninci P."/>
            <person name="Chao Q."/>
            <person name="Choy N."/>
            <person name="Enju A."/>
            <person name="Goldsmith A.D."/>
            <person name="Gurjal M."/>
            <person name="Hansen N.F."/>
            <person name="Hayashizaki Y."/>
            <person name="Johnson-Hopson C."/>
            <person name="Hsuan V.W."/>
            <person name="Iida K."/>
            <person name="Karnes M."/>
            <person name="Khan S."/>
            <person name="Koesema E."/>
            <person name="Ishida J."/>
            <person name="Jiang P.X."/>
            <person name="Jones T."/>
            <person name="Kawai J."/>
            <person name="Kamiya A."/>
            <person name="Meyers C."/>
            <person name="Nakajima M."/>
            <person name="Narusaka M."/>
            <person name="Seki M."/>
            <person name="Sakurai T."/>
            <person name="Satou M."/>
            <person name="Tamse R."/>
            <person name="Vaysberg M."/>
            <person name="Wallender E.K."/>
            <person name="Wong C."/>
            <person name="Yamamura Y."/>
            <person name="Yuan S."/>
            <person name="Shinozaki K."/>
            <person name="Davis R.W."/>
            <person name="Theologis A."/>
            <person name="Ecker J.R."/>
        </authorList>
    </citation>
    <scope>NUCLEOTIDE SEQUENCE [LARGE SCALE MRNA]</scope>
    <source>
        <strain>cv. Columbia</strain>
    </source>
</reference>
<reference key="4">
    <citation type="submission" date="2002-03" db="EMBL/GenBank/DDBJ databases">
        <title>Full-length cDNA from Arabidopsis thaliana.</title>
        <authorList>
            <person name="Brover V.V."/>
            <person name="Troukhan M.E."/>
            <person name="Alexandrov N.A."/>
            <person name="Lu Y.-P."/>
            <person name="Flavell R.B."/>
            <person name="Feldmann K.A."/>
        </authorList>
    </citation>
    <scope>NUCLEOTIDE SEQUENCE [LARGE SCALE MRNA]</scope>
</reference>
<reference key="5">
    <citation type="journal article" date="2005" name="Proc. Natl. Acad. Sci. U.S.A.">
        <title>AtCCMH, an essential component of the c-type cytochrome maturation pathway in Arabidopsis mitochondria, interacts with apocytochrome c.</title>
        <authorList>
            <person name="Meyer E.H."/>
            <person name="Giege P."/>
            <person name="Gelhaye E."/>
            <person name="Rayapuram N."/>
            <person name="Ahuja U."/>
            <person name="Thony-Meyer L."/>
            <person name="Grienenberger J.M."/>
            <person name="Bonnard G."/>
        </authorList>
    </citation>
    <scope>FUNCTION</scope>
    <scope>INTERACTION WITH CYTC-1</scope>
    <scope>SUBCELLULAR LOCATION</scope>
    <scope>TOPOLOGY</scope>
    <scope>DISRUPTION PHENOTYPE</scope>
</reference>
<reference key="6">
    <citation type="journal article" date="2008" name="J. Biol. Chem.">
        <title>The three mitochondrial encoded CcmF proteins form a complex that interacts with CCMH and c-type apocytochromes in Arabidopsis.</title>
        <authorList>
            <person name="Rayapuram N."/>
            <person name="Hagenmuller J."/>
            <person name="Grienenberger J.M."/>
            <person name="Bonnard G."/>
            <person name="Giege P."/>
        </authorList>
    </citation>
    <scope>FUNCTION</scope>
    <scope>INTERACTION WITH CCMFN1 AND CCMFN2</scope>
</reference>
<keyword id="KW-0201">Cytochrome c-type biogenesis</keyword>
<keyword id="KW-0349">Heme</keyword>
<keyword id="KW-0408">Iron</keyword>
<keyword id="KW-0472">Membrane</keyword>
<keyword id="KW-0479">Metal-binding</keyword>
<keyword id="KW-0496">Mitochondrion</keyword>
<keyword id="KW-0999">Mitochondrion inner membrane</keyword>
<keyword id="KW-1185">Reference proteome</keyword>
<keyword id="KW-0812">Transmembrane</keyword>
<keyword id="KW-1133">Transmembrane helix</keyword>
<dbReference type="EMBL" id="AC007591">
    <property type="protein sequence ID" value="AAD39651.1"/>
    <property type="molecule type" value="Genomic_DNA"/>
</dbReference>
<dbReference type="EMBL" id="CP002684">
    <property type="protein sequence ID" value="AEE29289.1"/>
    <property type="molecule type" value="Genomic_DNA"/>
</dbReference>
<dbReference type="EMBL" id="CP002684">
    <property type="protein sequence ID" value="AEE29290.1"/>
    <property type="molecule type" value="Genomic_DNA"/>
</dbReference>
<dbReference type="EMBL" id="AY050392">
    <property type="protein sequence ID" value="AAK91409.1"/>
    <property type="molecule type" value="mRNA"/>
</dbReference>
<dbReference type="EMBL" id="AY097355">
    <property type="protein sequence ID" value="AAM19871.1"/>
    <property type="molecule type" value="mRNA"/>
</dbReference>
<dbReference type="EMBL" id="AY085498">
    <property type="protein sequence ID" value="AAM62723.1"/>
    <property type="molecule type" value="mRNA"/>
</dbReference>
<dbReference type="PIR" id="D86286">
    <property type="entry name" value="D86286"/>
</dbReference>
<dbReference type="RefSeq" id="NP_563966.1">
    <property type="nucleotide sequence ID" value="NM_101390.2"/>
</dbReference>
<dbReference type="RefSeq" id="NP_973834.1">
    <property type="nucleotide sequence ID" value="NM_202105.2"/>
</dbReference>
<dbReference type="SMR" id="Q9XI46"/>
<dbReference type="FunCoup" id="Q9XI46">
    <property type="interactions" value="138"/>
</dbReference>
<dbReference type="IntAct" id="Q9XI46">
    <property type="interactions" value="4"/>
</dbReference>
<dbReference type="STRING" id="3702.Q9XI46"/>
<dbReference type="PaxDb" id="3702-AT1G15220.2"/>
<dbReference type="ProteomicsDB" id="223918"/>
<dbReference type="EnsemblPlants" id="AT1G15220.1">
    <property type="protein sequence ID" value="AT1G15220.1"/>
    <property type="gene ID" value="AT1G15220"/>
</dbReference>
<dbReference type="EnsemblPlants" id="AT1G15220.2">
    <property type="protein sequence ID" value="AT1G15220.2"/>
    <property type="gene ID" value="AT1G15220"/>
</dbReference>
<dbReference type="GeneID" id="838089"/>
<dbReference type="Gramene" id="AT1G15220.1">
    <property type="protein sequence ID" value="AT1G15220.1"/>
    <property type="gene ID" value="AT1G15220"/>
</dbReference>
<dbReference type="Gramene" id="AT1G15220.2">
    <property type="protein sequence ID" value="AT1G15220.2"/>
    <property type="gene ID" value="AT1G15220"/>
</dbReference>
<dbReference type="KEGG" id="ath:AT1G15220"/>
<dbReference type="Araport" id="AT1G15220"/>
<dbReference type="TAIR" id="AT1G15220">
    <property type="gene designation" value="CCMH"/>
</dbReference>
<dbReference type="eggNOG" id="ENOG502RXFW">
    <property type="taxonomic scope" value="Eukaryota"/>
</dbReference>
<dbReference type="HOGENOM" id="CLU_107187_1_0_1"/>
<dbReference type="InParanoid" id="Q9XI46"/>
<dbReference type="OMA" id="AGIWAYN"/>
<dbReference type="OrthoDB" id="2020000at2759"/>
<dbReference type="PhylomeDB" id="Q9XI46"/>
<dbReference type="PRO" id="PR:Q9XI46"/>
<dbReference type="Proteomes" id="UP000006548">
    <property type="component" value="Chromosome 1"/>
</dbReference>
<dbReference type="ExpressionAtlas" id="Q9XI46">
    <property type="expression patterns" value="baseline and differential"/>
</dbReference>
<dbReference type="GO" id="GO:0005743">
    <property type="term" value="C:mitochondrial inner membrane"/>
    <property type="evidence" value="ECO:0000314"/>
    <property type="project" value="TAIR"/>
</dbReference>
<dbReference type="GO" id="GO:0005739">
    <property type="term" value="C:mitochondrion"/>
    <property type="evidence" value="ECO:0007005"/>
    <property type="project" value="TAIR"/>
</dbReference>
<dbReference type="GO" id="GO:0032991">
    <property type="term" value="C:protein-containing complex"/>
    <property type="evidence" value="ECO:0000314"/>
    <property type="project" value="TAIR"/>
</dbReference>
<dbReference type="GO" id="GO:0046872">
    <property type="term" value="F:metal ion binding"/>
    <property type="evidence" value="ECO:0007669"/>
    <property type="project" value="UniProtKB-KW"/>
</dbReference>
<dbReference type="GO" id="GO:0016491">
    <property type="term" value="F:oxidoreductase activity"/>
    <property type="evidence" value="ECO:0000314"/>
    <property type="project" value="TAIR"/>
</dbReference>
<dbReference type="GO" id="GO:0017004">
    <property type="term" value="P:cytochrome complex assembly"/>
    <property type="evidence" value="ECO:0000304"/>
    <property type="project" value="UniProtKB"/>
</dbReference>
<dbReference type="GO" id="GO:0009793">
    <property type="term" value="P:embryo development ending in seed dormancy"/>
    <property type="evidence" value="ECO:0000315"/>
    <property type="project" value="TAIR"/>
</dbReference>
<dbReference type="CDD" id="cd16378">
    <property type="entry name" value="CcmH_N"/>
    <property type="match status" value="1"/>
</dbReference>
<dbReference type="FunFam" id="1.10.8.640:FF:000001">
    <property type="entry name" value="Cytochrome c-type biogenesis protein"/>
    <property type="match status" value="1"/>
</dbReference>
<dbReference type="Gene3D" id="1.10.8.640">
    <property type="entry name" value="Cytochrome C biogenesis protein"/>
    <property type="match status" value="1"/>
</dbReference>
<dbReference type="InterPro" id="IPR005616">
    <property type="entry name" value="CcmH/CycL/Ccl2/NrfF_N"/>
</dbReference>
<dbReference type="InterPro" id="IPR038297">
    <property type="entry name" value="CcmH/CycL/NrfF/Ccl2_sf"/>
</dbReference>
<dbReference type="PANTHER" id="PTHR47601">
    <property type="match status" value="1"/>
</dbReference>
<dbReference type="PANTHER" id="PTHR47601:SF1">
    <property type="entry name" value="CYTOCHROME C-TYPE BIOGENESIS CCMH-LIKE MITOCHONDRIAL PROTEIN"/>
    <property type="match status" value="1"/>
</dbReference>
<dbReference type="Pfam" id="PF03918">
    <property type="entry name" value="CcmH"/>
    <property type="match status" value="1"/>
</dbReference>
<organism>
    <name type="scientific">Arabidopsis thaliana</name>
    <name type="common">Mouse-ear cress</name>
    <dbReference type="NCBI Taxonomy" id="3702"/>
    <lineage>
        <taxon>Eukaryota</taxon>
        <taxon>Viridiplantae</taxon>
        <taxon>Streptophyta</taxon>
        <taxon>Embryophyta</taxon>
        <taxon>Tracheophyta</taxon>
        <taxon>Spermatophyta</taxon>
        <taxon>Magnoliopsida</taxon>
        <taxon>eudicotyledons</taxon>
        <taxon>Gunneridae</taxon>
        <taxon>Pentapetalae</taxon>
        <taxon>rosids</taxon>
        <taxon>malvids</taxon>
        <taxon>Brassicales</taxon>
        <taxon>Brassicaceae</taxon>
        <taxon>Camelineae</taxon>
        <taxon>Arabidopsis</taxon>
    </lineage>
</organism>
<comment type="function">
    <text evidence="2 3">Plays a central role in mitochondrial cytochrome c maturation. Probable component of a heme lyase complex involved in the reduction of apocytochrome c (PubMed:16236729). Forms a complex with CCMF proteins (CCMFC, CCMFN1 and CCMFN2) that performs the assembly of heme with c-type apocytochromes in mitochondria (PubMed:18644794).</text>
</comment>
<comment type="subunit">
    <text evidence="2 3">Interacts (via N-terminus) with CYTC-1 (PubMed:16236729). Interacts with CCMFN1 and CCMFN2 (PubMed:18644794).</text>
</comment>
<comment type="interaction">
    <interactant intactId="EBI-763363">
        <id>Q9XI46</id>
    </interactant>
    <interactant intactId="EBI-763400">
        <id>Q33884</id>
        <label>CCMFN2</label>
    </interactant>
    <organismsDiffer>false</organismsDiffer>
    <experiments>3</experiments>
</comment>
<comment type="subcellular location">
    <subcellularLocation>
        <location evidence="2">Mitochondrion inner membrane</location>
        <topology evidence="1">Single-pass membrane protein</topology>
    </subcellularLocation>
</comment>
<comment type="disruption phenotype">
    <text evidence="2">Embryonic lethality when homozygous. Arrest of embryo development at the torpedo stage.</text>
</comment>
<comment type="similarity">
    <text evidence="5">Belongs to the CcmH/CycL/Ccl2/NrfF family.</text>
</comment>
<name>CCMH_ARATH</name>
<protein>
    <recommendedName>
        <fullName evidence="5">Cytochrome c-type biogenesis CcmH-like mitochondrial protein</fullName>
        <shortName evidence="4">AtCCMH</shortName>
    </recommendedName>
</protein>
<proteinExistence type="evidence at protein level"/>
<sequence length="159" mass="17885">MEKTDEERKKAQMLDARARNISHNVRCTECGSQSIEDSQADIAILLRQLIRNEIGAGKTDKEIYSKLEDEFGETVLYAPKFDLQTAALWLTPVIIAGGTAAGIVYQKHRLRKNVDIMALNLIRGVPLTPKERVTILDVLIPPSPPPQGVVSRLRRWLNR</sequence>
<feature type="chain" id="PRO_0000432846" description="Cytochrome c-type biogenesis CcmH-like mitochondrial protein">
    <location>
        <begin position="1"/>
        <end position="159"/>
    </location>
</feature>
<feature type="topological domain" description="Mitochondrial intermembrane" evidence="6">
    <location>
        <begin position="1"/>
        <end position="82"/>
    </location>
</feature>
<feature type="transmembrane region" description="Helical" evidence="1">
    <location>
        <begin position="83"/>
        <end position="105"/>
    </location>
</feature>
<feature type="topological domain" description="Mitochondrial matrix" evidence="6">
    <location>
        <begin position="106"/>
        <end position="159"/>
    </location>
</feature>
<feature type="binding site" description="covalent" evidence="6">
    <location>
        <position position="27"/>
    </location>
    <ligand>
        <name>heme</name>
        <dbReference type="ChEBI" id="CHEBI:30413"/>
    </ligand>
</feature>
<feature type="binding site" description="covalent" evidence="6">
    <location>
        <position position="30"/>
    </location>
    <ligand>
        <name>heme</name>
        <dbReference type="ChEBI" id="CHEBI:30413"/>
    </ligand>
</feature>
<accession>Q9XI46</accession>